<feature type="chain" id="PRO_0000142408" description="Adenine deaminase 2">
    <location>
        <begin position="1"/>
        <end position="625"/>
    </location>
</feature>
<gene>
    <name evidence="1" type="primary">ade2</name>
    <name type="ordered locus">bll6142</name>
</gene>
<accession>Q89H53</accession>
<sequence>MRQVMNAIPDDLLITAPDEVRIRQDLVLTALGHRPADRSLRVGRLLDVHSRTWSEDQEIVIKGRRIAWVGPAGSYPGEVRERVHRPDVAAVPGFGEVHKHIESSHLTPEWEAALVLPHGNTWTCEASHEFSNVNGARNLEFWFEARRRGSPLKIFPQPGSAVPPTAYEWGGGWYGRDEQARFMAESLMVTGLDEVMDWPAVWNPDNPSYKRLWGMIEATFAARGVVEGHASGLRDLPSINAFAAAGLASDHEVQTPEETWDKLTRGLFVELRVYAMDEIVRWLLAKGLQDWSQIAFTTDDRSASHTLELGASDHNARLAIEAGLAPEIAIQCLTINPARHMRLTPFVGSLAPGRFGDVVLLSDVGKLTIAEVWADGVQISEGERYIGQVPEIVWPDWATKTVNIKRSIKPQDFELRAEPGRATMKAAVIRPFHWHPEFYTLELPVRDGAVQRDESEAITKFAIVDRFSGDGRIAKMFWRGCGPRTPETAVACSVAHDKHNIWVVGSSDAAMAKAVNALIELQGGWALVREGELVATVRFEVGGLMSCRSAQALDAEMQALYAEGRKVDWMYEPTYRPRWYPGFPERLMFATLTCAPWSWVLVAPCEQAPLGFINVQTGEAHPVIW</sequence>
<protein>
    <recommendedName>
        <fullName evidence="1">Adenine deaminase 2</fullName>
        <shortName evidence="1">Adenase 2</shortName>
        <shortName evidence="1">Adenine aminase 2</shortName>
        <ecNumber evidence="1">3.5.4.2</ecNumber>
    </recommendedName>
</protein>
<dbReference type="EC" id="3.5.4.2" evidence="1"/>
<dbReference type="EMBL" id="BA000040">
    <property type="protein sequence ID" value="BAC51407.1"/>
    <property type="molecule type" value="Genomic_DNA"/>
</dbReference>
<dbReference type="RefSeq" id="NP_772782.1">
    <property type="nucleotide sequence ID" value="NC_004463.1"/>
</dbReference>
<dbReference type="SMR" id="Q89H53"/>
<dbReference type="STRING" id="224911.AAV28_28255"/>
<dbReference type="EnsemblBacteria" id="BAC51407">
    <property type="protein sequence ID" value="BAC51407"/>
    <property type="gene ID" value="BAC51407"/>
</dbReference>
<dbReference type="KEGG" id="bja:bll6142"/>
<dbReference type="PATRIC" id="fig|224911.5.peg.6275"/>
<dbReference type="eggNOG" id="COG1001">
    <property type="taxonomic scope" value="Bacteria"/>
</dbReference>
<dbReference type="HOGENOM" id="CLU_027935_0_0_5"/>
<dbReference type="InParanoid" id="Q89H53"/>
<dbReference type="OrthoDB" id="9775607at2"/>
<dbReference type="PhylomeDB" id="Q89H53"/>
<dbReference type="Proteomes" id="UP000002526">
    <property type="component" value="Chromosome"/>
</dbReference>
<dbReference type="GO" id="GO:0000034">
    <property type="term" value="F:adenine deaminase activity"/>
    <property type="evidence" value="ECO:0000318"/>
    <property type="project" value="GO_Central"/>
</dbReference>
<dbReference type="GO" id="GO:0006146">
    <property type="term" value="P:adenine catabolic process"/>
    <property type="evidence" value="ECO:0007669"/>
    <property type="project" value="InterPro"/>
</dbReference>
<dbReference type="FunFam" id="3.20.20.140:FF:000245">
    <property type="entry name" value="Adenine deaminase 1"/>
    <property type="match status" value="1"/>
</dbReference>
<dbReference type="Gene3D" id="3.20.20.140">
    <property type="entry name" value="Metal-dependent hydrolases"/>
    <property type="match status" value="1"/>
</dbReference>
<dbReference type="Gene3D" id="2.30.40.10">
    <property type="entry name" value="Urease, subunit C, domain 1"/>
    <property type="match status" value="1"/>
</dbReference>
<dbReference type="HAMAP" id="MF_01518">
    <property type="entry name" value="Adenine_deamin"/>
    <property type="match status" value="1"/>
</dbReference>
<dbReference type="InterPro" id="IPR006679">
    <property type="entry name" value="Adenine_deam"/>
</dbReference>
<dbReference type="InterPro" id="IPR026912">
    <property type="entry name" value="Adenine_deam_C"/>
</dbReference>
<dbReference type="InterPro" id="IPR006680">
    <property type="entry name" value="Amidohydro-rel"/>
</dbReference>
<dbReference type="InterPro" id="IPR011059">
    <property type="entry name" value="Metal-dep_hydrolase_composite"/>
</dbReference>
<dbReference type="InterPro" id="IPR032466">
    <property type="entry name" value="Metal_Hydrolase"/>
</dbReference>
<dbReference type="PANTHER" id="PTHR11113:SF2">
    <property type="entry name" value="ADENINE DEAMINASE"/>
    <property type="match status" value="1"/>
</dbReference>
<dbReference type="PANTHER" id="PTHR11113">
    <property type="entry name" value="N-ACETYLGLUCOSAMINE-6-PHOSPHATE DEACETYLASE"/>
    <property type="match status" value="1"/>
</dbReference>
<dbReference type="Pfam" id="PF13382">
    <property type="entry name" value="Adenine_deam_C"/>
    <property type="match status" value="1"/>
</dbReference>
<dbReference type="Pfam" id="PF01979">
    <property type="entry name" value="Amidohydro_1"/>
    <property type="match status" value="1"/>
</dbReference>
<dbReference type="SUPFAM" id="SSF51338">
    <property type="entry name" value="Composite domain of metallo-dependent hydrolases"/>
    <property type="match status" value="1"/>
</dbReference>
<dbReference type="SUPFAM" id="SSF51556">
    <property type="entry name" value="Metallo-dependent hydrolases"/>
    <property type="match status" value="1"/>
</dbReference>
<reference key="1">
    <citation type="journal article" date="2002" name="DNA Res.">
        <title>Complete genomic sequence of nitrogen-fixing symbiotic bacterium Bradyrhizobium japonicum USDA110.</title>
        <authorList>
            <person name="Kaneko T."/>
            <person name="Nakamura Y."/>
            <person name="Sato S."/>
            <person name="Minamisawa K."/>
            <person name="Uchiumi T."/>
            <person name="Sasamoto S."/>
            <person name="Watanabe A."/>
            <person name="Idesawa K."/>
            <person name="Iriguchi M."/>
            <person name="Kawashima K."/>
            <person name="Kohara M."/>
            <person name="Matsumoto M."/>
            <person name="Shimpo S."/>
            <person name="Tsuruoka H."/>
            <person name="Wada T."/>
            <person name="Yamada M."/>
            <person name="Tabata S."/>
        </authorList>
    </citation>
    <scope>NUCLEOTIDE SEQUENCE [LARGE SCALE GENOMIC DNA]</scope>
    <source>
        <strain>JCM 10833 / BCRC 13528 / IAM 13628 / NBRC 14792 / USDA 110</strain>
    </source>
</reference>
<comment type="catalytic activity">
    <reaction evidence="1">
        <text>adenine + H2O + H(+) = hypoxanthine + NH4(+)</text>
        <dbReference type="Rhea" id="RHEA:23688"/>
        <dbReference type="ChEBI" id="CHEBI:15377"/>
        <dbReference type="ChEBI" id="CHEBI:15378"/>
        <dbReference type="ChEBI" id="CHEBI:16708"/>
        <dbReference type="ChEBI" id="CHEBI:17368"/>
        <dbReference type="ChEBI" id="CHEBI:28938"/>
        <dbReference type="EC" id="3.5.4.2"/>
    </reaction>
</comment>
<comment type="cofactor">
    <cofactor evidence="1">
        <name>Mn(2+)</name>
        <dbReference type="ChEBI" id="CHEBI:29035"/>
    </cofactor>
</comment>
<comment type="similarity">
    <text evidence="1">Belongs to the metallo-dependent hydrolases superfamily. Adenine deaminase family.</text>
</comment>
<name>ADEC2_BRADU</name>
<keyword id="KW-0378">Hydrolase</keyword>
<keyword id="KW-0464">Manganese</keyword>
<keyword id="KW-1185">Reference proteome</keyword>
<evidence type="ECO:0000255" key="1">
    <source>
        <dbReference type="HAMAP-Rule" id="MF_01518"/>
    </source>
</evidence>
<organism>
    <name type="scientific">Bradyrhizobium diazoefficiens (strain JCM 10833 / BCRC 13528 / IAM 13628 / NBRC 14792 / USDA 110)</name>
    <dbReference type="NCBI Taxonomy" id="224911"/>
    <lineage>
        <taxon>Bacteria</taxon>
        <taxon>Pseudomonadati</taxon>
        <taxon>Pseudomonadota</taxon>
        <taxon>Alphaproteobacteria</taxon>
        <taxon>Hyphomicrobiales</taxon>
        <taxon>Nitrobacteraceae</taxon>
        <taxon>Bradyrhizobium</taxon>
    </lineage>
</organism>
<proteinExistence type="inferred from homology"/>